<reference key="1">
    <citation type="journal article" date="1998" name="Nature">
        <title>The genome sequence of Rickettsia prowazekii and the origin of mitochondria.</title>
        <authorList>
            <person name="Andersson S.G.E."/>
            <person name="Zomorodipour A."/>
            <person name="Andersson J.O."/>
            <person name="Sicheritz-Ponten T."/>
            <person name="Alsmark U.C.M."/>
            <person name="Podowski R.M."/>
            <person name="Naeslund A.K."/>
            <person name="Eriksson A.-S."/>
            <person name="Winkler H.H."/>
            <person name="Kurland C.G."/>
        </authorList>
    </citation>
    <scope>NUCLEOTIDE SEQUENCE [LARGE SCALE GENOMIC DNA]</scope>
    <source>
        <strain>Madrid E</strain>
    </source>
</reference>
<keyword id="KW-1185">Reference proteome</keyword>
<organism>
    <name type="scientific">Rickettsia prowazekii (strain Madrid E)</name>
    <dbReference type="NCBI Taxonomy" id="272947"/>
    <lineage>
        <taxon>Bacteria</taxon>
        <taxon>Pseudomonadati</taxon>
        <taxon>Pseudomonadota</taxon>
        <taxon>Alphaproteobacteria</taxon>
        <taxon>Rickettsiales</taxon>
        <taxon>Rickettsiaceae</taxon>
        <taxon>Rickettsieae</taxon>
        <taxon>Rickettsia</taxon>
        <taxon>typhus group</taxon>
    </lineage>
</organism>
<evidence type="ECO:0000255" key="1">
    <source>
        <dbReference type="HAMAP-Rule" id="MF_00634"/>
    </source>
</evidence>
<feature type="chain" id="PRO_0000139453" description="UPF0235 protein RP839">
    <location>
        <begin position="1"/>
        <end position="105"/>
    </location>
</feature>
<accession>Q9ZCC0</accession>
<sequence length="105" mass="12156">MNKFYIYNSFKHEALINVKVKPYAKQNLIGNFVIINNIPYIKLAIKATPEQGKANEGIIHYLAKEWELSRSSIEIIKGHTHSLKTILIKNINEDYLNLIINAYIK</sequence>
<proteinExistence type="inferred from homology"/>
<protein>
    <recommendedName>
        <fullName evidence="1">UPF0235 protein RP839</fullName>
    </recommendedName>
</protein>
<comment type="similarity">
    <text evidence="1">Belongs to the UPF0235 family.</text>
</comment>
<gene>
    <name type="ordered locus">RP839</name>
</gene>
<dbReference type="EMBL" id="AJ235273">
    <property type="protein sequence ID" value="CAA15263.1"/>
    <property type="molecule type" value="Genomic_DNA"/>
</dbReference>
<dbReference type="PIR" id="G71645">
    <property type="entry name" value="G71645"/>
</dbReference>
<dbReference type="RefSeq" id="NP_221187.1">
    <property type="nucleotide sequence ID" value="NC_000963.1"/>
</dbReference>
<dbReference type="RefSeq" id="WP_004596809.1">
    <property type="nucleotide sequence ID" value="NC_000963.1"/>
</dbReference>
<dbReference type="SMR" id="Q9ZCC0"/>
<dbReference type="STRING" id="272947.gene:17555908"/>
<dbReference type="EnsemblBacteria" id="CAA15263">
    <property type="protein sequence ID" value="CAA15263"/>
    <property type="gene ID" value="CAA15263"/>
</dbReference>
<dbReference type="KEGG" id="rpr:RP839"/>
<dbReference type="PATRIC" id="fig|272947.5.peg.877"/>
<dbReference type="eggNOG" id="COG1872">
    <property type="taxonomic scope" value="Bacteria"/>
</dbReference>
<dbReference type="HOGENOM" id="CLU_130694_6_2_5"/>
<dbReference type="OrthoDB" id="9801972at2"/>
<dbReference type="Proteomes" id="UP000002480">
    <property type="component" value="Chromosome"/>
</dbReference>
<dbReference type="GO" id="GO:0005737">
    <property type="term" value="C:cytoplasm"/>
    <property type="evidence" value="ECO:0007669"/>
    <property type="project" value="TreeGrafter"/>
</dbReference>
<dbReference type="Gene3D" id="3.30.1200.10">
    <property type="entry name" value="YggU-like"/>
    <property type="match status" value="1"/>
</dbReference>
<dbReference type="HAMAP" id="MF_00634">
    <property type="entry name" value="UPF0235"/>
    <property type="match status" value="1"/>
</dbReference>
<dbReference type="InterPro" id="IPR003746">
    <property type="entry name" value="DUF167"/>
</dbReference>
<dbReference type="InterPro" id="IPR036591">
    <property type="entry name" value="YggU-like_sf"/>
</dbReference>
<dbReference type="NCBIfam" id="TIGR00251">
    <property type="entry name" value="DUF167 family protein"/>
    <property type="match status" value="1"/>
</dbReference>
<dbReference type="NCBIfam" id="NF002419">
    <property type="entry name" value="PRK01530.1"/>
    <property type="match status" value="1"/>
</dbReference>
<dbReference type="PANTHER" id="PTHR13420">
    <property type="entry name" value="UPF0235 PROTEIN C15ORF40"/>
    <property type="match status" value="1"/>
</dbReference>
<dbReference type="PANTHER" id="PTHR13420:SF7">
    <property type="entry name" value="UPF0235 PROTEIN C15ORF40"/>
    <property type="match status" value="1"/>
</dbReference>
<dbReference type="Pfam" id="PF02594">
    <property type="entry name" value="DUF167"/>
    <property type="match status" value="1"/>
</dbReference>
<dbReference type="SMART" id="SM01152">
    <property type="entry name" value="DUF167"/>
    <property type="match status" value="1"/>
</dbReference>
<dbReference type="SUPFAM" id="SSF69786">
    <property type="entry name" value="YggU-like"/>
    <property type="match status" value="1"/>
</dbReference>
<name>Y839_RICPR</name>